<protein>
    <recommendedName>
        <fullName>Steroidogenic factor 1</fullName>
        <shortName>SF-1</shortName>
        <shortName>STF-1</shortName>
    </recommendedName>
    <alternativeName>
        <fullName>Adrenal 4-binding protein</fullName>
    </alternativeName>
    <alternativeName>
        <fullName>Fushi tarazu factor homolog 1</fullName>
    </alternativeName>
    <alternativeName>
        <fullName>Nuclear receptor subfamily 5 group A member 1</fullName>
    </alternativeName>
    <alternativeName>
        <fullName>Steroid hormone receptor Ad4BP</fullName>
    </alternativeName>
</protein>
<dbReference type="EMBL" id="U84399">
    <property type="protein sequence ID" value="AAC64209.1"/>
    <property type="molecule type" value="mRNA"/>
</dbReference>
<dbReference type="EMBL" id="AP009124">
    <property type="protein sequence ID" value="BAF45331.1"/>
    <property type="molecule type" value="Genomic_DNA"/>
</dbReference>
<dbReference type="RefSeq" id="NP_999344.1">
    <property type="nucleotide sequence ID" value="NM_214179.1"/>
</dbReference>
<dbReference type="RefSeq" id="XP_013849311.1">
    <property type="nucleotide sequence ID" value="XM_013993857.1"/>
</dbReference>
<dbReference type="RefSeq" id="XP_020938613.1">
    <property type="nucleotide sequence ID" value="XM_021082954.1"/>
</dbReference>
<dbReference type="RefSeq" id="XP_020938616.1">
    <property type="nucleotide sequence ID" value="XM_021082957.1"/>
</dbReference>
<dbReference type="SMR" id="P79387"/>
<dbReference type="FunCoup" id="P79387">
    <property type="interactions" value="382"/>
</dbReference>
<dbReference type="STRING" id="9823.ENSSSCP00000047808"/>
<dbReference type="PaxDb" id="9823-ENSSSCP00000005989"/>
<dbReference type="Ensembl" id="ENSSSCT00000034748.3">
    <property type="protein sequence ID" value="ENSSSCP00000047808.1"/>
    <property type="gene ID" value="ENSSSCG00000005588.5"/>
</dbReference>
<dbReference type="Ensembl" id="ENSSSCT00015050376.1">
    <property type="protein sequence ID" value="ENSSSCP00015020094.1"/>
    <property type="gene ID" value="ENSSSCG00015037779.1"/>
</dbReference>
<dbReference type="Ensembl" id="ENSSSCT00025044265.1">
    <property type="protein sequence ID" value="ENSSSCP00025018842.1"/>
    <property type="gene ID" value="ENSSSCG00025032540.1"/>
</dbReference>
<dbReference type="Ensembl" id="ENSSSCT00030064379.1">
    <property type="protein sequence ID" value="ENSSSCP00030029440.1"/>
    <property type="gene ID" value="ENSSSCG00030046093.1"/>
</dbReference>
<dbReference type="Ensembl" id="ENSSSCT00035103682.1">
    <property type="protein sequence ID" value="ENSSSCP00035044375.1"/>
    <property type="gene ID" value="ENSSSCG00035076132.1"/>
</dbReference>
<dbReference type="Ensembl" id="ENSSSCT00040004107.1">
    <property type="protein sequence ID" value="ENSSSCP00040001286.1"/>
    <property type="gene ID" value="ENSSSCG00040003271.1"/>
</dbReference>
<dbReference type="Ensembl" id="ENSSSCT00045057600.1">
    <property type="protein sequence ID" value="ENSSSCP00045040288.1"/>
    <property type="gene ID" value="ENSSSCG00045033632.1"/>
</dbReference>
<dbReference type="Ensembl" id="ENSSSCT00055055738.1">
    <property type="protein sequence ID" value="ENSSSCP00055044488.1"/>
    <property type="gene ID" value="ENSSSCG00055028135.1"/>
</dbReference>
<dbReference type="Ensembl" id="ENSSSCT00060106495.1">
    <property type="protein sequence ID" value="ENSSSCP00060047033.1"/>
    <property type="gene ID" value="ENSSSCG00060077360.1"/>
</dbReference>
<dbReference type="Ensembl" id="ENSSSCT00065028781.1">
    <property type="protein sequence ID" value="ENSSSCP00065011774.1"/>
    <property type="gene ID" value="ENSSSCG00065021631.1"/>
</dbReference>
<dbReference type="Ensembl" id="ENSSSCT00070033299.1">
    <property type="protein sequence ID" value="ENSSSCP00070027811.1"/>
    <property type="gene ID" value="ENSSSCG00070016898.1"/>
</dbReference>
<dbReference type="Ensembl" id="ENSSSCT00070033310.1">
    <property type="protein sequence ID" value="ENSSSCP00070027821.1"/>
    <property type="gene ID" value="ENSSSCG00070016898.1"/>
</dbReference>
<dbReference type="Ensembl" id="ENSSSCT00090050736">
    <property type="protein sequence ID" value="ENSSSCP00090031591"/>
    <property type="gene ID" value="ENSSSCG00090028667"/>
</dbReference>
<dbReference type="Ensembl" id="ENSSSCT00105009836">
    <property type="protein sequence ID" value="ENSSSCP00105007201"/>
    <property type="gene ID" value="ENSSSCG00105004921"/>
</dbReference>
<dbReference type="Ensembl" id="ENSSSCT00110027953">
    <property type="protein sequence ID" value="ENSSSCP00110018612"/>
    <property type="gene ID" value="ENSSSCG00110014795"/>
</dbReference>
<dbReference type="Ensembl" id="ENSSSCT00115012975">
    <property type="protein sequence ID" value="ENSSSCP00115012258"/>
    <property type="gene ID" value="ENSSSCG00115007432"/>
</dbReference>
<dbReference type="Ensembl" id="ENSSSCT00130067874">
    <property type="protein sequence ID" value="ENSSSCP00130048673"/>
    <property type="gene ID" value="ENSSSCG00130034741"/>
</dbReference>
<dbReference type="GeneID" id="397368"/>
<dbReference type="KEGG" id="ssc:397368"/>
<dbReference type="CTD" id="2516"/>
<dbReference type="VGNC" id="VGNC:90886">
    <property type="gene designation" value="NR5A1"/>
</dbReference>
<dbReference type="eggNOG" id="KOG4218">
    <property type="taxonomic scope" value="Eukaryota"/>
</dbReference>
<dbReference type="GeneTree" id="ENSGT00940000153391"/>
<dbReference type="InParanoid" id="P79387"/>
<dbReference type="OMA" id="YPYPEVY"/>
<dbReference type="OrthoDB" id="5984981at2759"/>
<dbReference type="Reactome" id="R-SSC-383280">
    <property type="pathway name" value="Nuclear Receptor transcription pathway"/>
</dbReference>
<dbReference type="Reactome" id="R-SSC-4090294">
    <property type="pathway name" value="SUMOylation of intracellular receptors"/>
</dbReference>
<dbReference type="Proteomes" id="UP000008227">
    <property type="component" value="Chromosome 1"/>
</dbReference>
<dbReference type="Proteomes" id="UP000314985">
    <property type="component" value="Chromosome 1"/>
</dbReference>
<dbReference type="Proteomes" id="UP000694570">
    <property type="component" value="Unplaced"/>
</dbReference>
<dbReference type="Proteomes" id="UP000694571">
    <property type="component" value="Unplaced"/>
</dbReference>
<dbReference type="Proteomes" id="UP000694720">
    <property type="component" value="Unplaced"/>
</dbReference>
<dbReference type="Proteomes" id="UP000694722">
    <property type="component" value="Unplaced"/>
</dbReference>
<dbReference type="Proteomes" id="UP000694723">
    <property type="component" value="Unplaced"/>
</dbReference>
<dbReference type="Proteomes" id="UP000694724">
    <property type="component" value="Unplaced"/>
</dbReference>
<dbReference type="Proteomes" id="UP000694725">
    <property type="component" value="Unplaced"/>
</dbReference>
<dbReference type="Proteomes" id="UP000694726">
    <property type="component" value="Unplaced"/>
</dbReference>
<dbReference type="Proteomes" id="UP000694727">
    <property type="component" value="Unplaced"/>
</dbReference>
<dbReference type="Proteomes" id="UP000694728">
    <property type="component" value="Unplaced"/>
</dbReference>
<dbReference type="Bgee" id="ENSSSCG00000005588">
    <property type="expression patterns" value="Expressed in granulosa cell and 6 other cell types or tissues"/>
</dbReference>
<dbReference type="GO" id="GO:0005829">
    <property type="term" value="C:cytosol"/>
    <property type="evidence" value="ECO:0007669"/>
    <property type="project" value="Ensembl"/>
</dbReference>
<dbReference type="GO" id="GO:0005654">
    <property type="term" value="C:nucleoplasm"/>
    <property type="evidence" value="ECO:0007669"/>
    <property type="project" value="Ensembl"/>
</dbReference>
<dbReference type="GO" id="GO:0005634">
    <property type="term" value="C:nucleus"/>
    <property type="evidence" value="ECO:0000250"/>
    <property type="project" value="HGNC-UCL"/>
</dbReference>
<dbReference type="GO" id="GO:0090575">
    <property type="term" value="C:RNA polymerase II transcription regulator complex"/>
    <property type="evidence" value="ECO:0000318"/>
    <property type="project" value="GO_Central"/>
</dbReference>
<dbReference type="GO" id="GO:0003682">
    <property type="term" value="F:chromatin binding"/>
    <property type="evidence" value="ECO:0007669"/>
    <property type="project" value="Ensembl"/>
</dbReference>
<dbReference type="GO" id="GO:0003677">
    <property type="term" value="F:DNA binding"/>
    <property type="evidence" value="ECO:0000250"/>
    <property type="project" value="HGNC-UCL"/>
</dbReference>
<dbReference type="GO" id="GO:0019899">
    <property type="term" value="F:enzyme binding"/>
    <property type="evidence" value="ECO:0007669"/>
    <property type="project" value="Ensembl"/>
</dbReference>
<dbReference type="GO" id="GO:0004879">
    <property type="term" value="F:nuclear receptor activity"/>
    <property type="evidence" value="ECO:0007669"/>
    <property type="project" value="Ensembl"/>
</dbReference>
<dbReference type="GO" id="GO:0005543">
    <property type="term" value="F:phospholipid binding"/>
    <property type="evidence" value="ECO:0007669"/>
    <property type="project" value="Ensembl"/>
</dbReference>
<dbReference type="GO" id="GO:0000978">
    <property type="term" value="F:RNA polymerase II cis-regulatory region sequence-specific DNA binding"/>
    <property type="evidence" value="ECO:0000318"/>
    <property type="project" value="GO_Central"/>
</dbReference>
<dbReference type="GO" id="GO:0001221">
    <property type="term" value="F:transcription coregulator binding"/>
    <property type="evidence" value="ECO:0007669"/>
    <property type="project" value="Ensembl"/>
</dbReference>
<dbReference type="GO" id="GO:0008270">
    <property type="term" value="F:zinc ion binding"/>
    <property type="evidence" value="ECO:0007669"/>
    <property type="project" value="UniProtKB-KW"/>
</dbReference>
<dbReference type="GO" id="GO:0030325">
    <property type="term" value="P:adrenal gland development"/>
    <property type="evidence" value="ECO:0007669"/>
    <property type="project" value="Ensembl"/>
</dbReference>
<dbReference type="GO" id="GO:0008585">
    <property type="term" value="P:female gonad development"/>
    <property type="evidence" value="ECO:0000250"/>
    <property type="project" value="UniProtKB"/>
</dbReference>
<dbReference type="GO" id="GO:0042445">
    <property type="term" value="P:hormone metabolic process"/>
    <property type="evidence" value="ECO:0007669"/>
    <property type="project" value="Ensembl"/>
</dbReference>
<dbReference type="GO" id="GO:0009755">
    <property type="term" value="P:hormone-mediated signaling pathway"/>
    <property type="evidence" value="ECO:0000318"/>
    <property type="project" value="GO_Central"/>
</dbReference>
<dbReference type="GO" id="GO:0033327">
    <property type="term" value="P:Leydig cell differentiation"/>
    <property type="evidence" value="ECO:0007669"/>
    <property type="project" value="Ensembl"/>
</dbReference>
<dbReference type="GO" id="GO:0001553">
    <property type="term" value="P:luteinization"/>
    <property type="evidence" value="ECO:0007669"/>
    <property type="project" value="Ensembl"/>
</dbReference>
<dbReference type="GO" id="GO:0051457">
    <property type="term" value="P:maintenance of protein location in nucleus"/>
    <property type="evidence" value="ECO:0007669"/>
    <property type="project" value="Ensembl"/>
</dbReference>
<dbReference type="GO" id="GO:0008584">
    <property type="term" value="P:male gonad development"/>
    <property type="evidence" value="ECO:0000250"/>
    <property type="project" value="UniProtKB"/>
</dbReference>
<dbReference type="GO" id="GO:0030238">
    <property type="term" value="P:male sex determination"/>
    <property type="evidence" value="ECO:0007669"/>
    <property type="project" value="Ensembl"/>
</dbReference>
<dbReference type="GO" id="GO:2000195">
    <property type="term" value="P:negative regulation of female gonad development"/>
    <property type="evidence" value="ECO:0007669"/>
    <property type="project" value="Ensembl"/>
</dbReference>
<dbReference type="GO" id="GO:0010628">
    <property type="term" value="P:positive regulation of gene expression"/>
    <property type="evidence" value="ECO:0000250"/>
    <property type="project" value="UniProtKB"/>
</dbReference>
<dbReference type="GO" id="GO:2000020">
    <property type="term" value="P:positive regulation of male gonad development"/>
    <property type="evidence" value="ECO:0007669"/>
    <property type="project" value="Ensembl"/>
</dbReference>
<dbReference type="GO" id="GO:0045944">
    <property type="term" value="P:positive regulation of transcription by RNA polymerase II"/>
    <property type="evidence" value="ECO:0007669"/>
    <property type="project" value="Ensembl"/>
</dbReference>
<dbReference type="GO" id="GO:0006357">
    <property type="term" value="P:regulation of transcription by RNA polymerase II"/>
    <property type="evidence" value="ECO:0000318"/>
    <property type="project" value="GO_Central"/>
</dbReference>
<dbReference type="GO" id="GO:0060008">
    <property type="term" value="P:Sertoli cell differentiation"/>
    <property type="evidence" value="ECO:0007669"/>
    <property type="project" value="Ensembl"/>
</dbReference>
<dbReference type="GO" id="GO:0007530">
    <property type="term" value="P:sex determination"/>
    <property type="evidence" value="ECO:0000250"/>
    <property type="project" value="UniProtKB"/>
</dbReference>
<dbReference type="GO" id="GO:0009888">
    <property type="term" value="P:tissue development"/>
    <property type="evidence" value="ECO:0000318"/>
    <property type="project" value="GO_Central"/>
</dbReference>
<dbReference type="CDD" id="cd07167">
    <property type="entry name" value="NR_DBD_Lrh-1_like"/>
    <property type="match status" value="1"/>
</dbReference>
<dbReference type="CDD" id="cd07070">
    <property type="entry name" value="NR_LBD_SF-1"/>
    <property type="match status" value="1"/>
</dbReference>
<dbReference type="FunFam" id="3.30.50.10:FF:000006">
    <property type="entry name" value="Nuclear receptor subfamily 5 group A member"/>
    <property type="match status" value="1"/>
</dbReference>
<dbReference type="FunFam" id="1.10.565.10:FF:000011">
    <property type="entry name" value="Nuclear receptor subfamily 5, group A, member 2"/>
    <property type="match status" value="1"/>
</dbReference>
<dbReference type="Gene3D" id="3.30.50.10">
    <property type="entry name" value="Erythroid Transcription Factor GATA-1, subunit A"/>
    <property type="match status" value="1"/>
</dbReference>
<dbReference type="Gene3D" id="1.10.565.10">
    <property type="entry name" value="Retinoid X Receptor"/>
    <property type="match status" value="1"/>
</dbReference>
<dbReference type="InterPro" id="IPR035500">
    <property type="entry name" value="NHR-like_dom_sf"/>
</dbReference>
<dbReference type="InterPro" id="IPR016355">
    <property type="entry name" value="NR5-like"/>
</dbReference>
<dbReference type="InterPro" id="IPR000536">
    <property type="entry name" value="Nucl_hrmn_rcpt_lig-bd"/>
</dbReference>
<dbReference type="InterPro" id="IPR001723">
    <property type="entry name" value="Nuclear_hrmn_rcpt"/>
</dbReference>
<dbReference type="InterPro" id="IPR001628">
    <property type="entry name" value="Znf_hrmn_rcpt"/>
</dbReference>
<dbReference type="InterPro" id="IPR013088">
    <property type="entry name" value="Znf_NHR/GATA"/>
</dbReference>
<dbReference type="PANTHER" id="PTHR24086">
    <property type="entry name" value="NUCLEAR RECEPTOR SUBFAMILY 5 GROUP A"/>
    <property type="match status" value="1"/>
</dbReference>
<dbReference type="PANTHER" id="PTHR24086:SF24">
    <property type="entry name" value="STEROIDOGENIC FACTOR 1"/>
    <property type="match status" value="1"/>
</dbReference>
<dbReference type="Pfam" id="PF00104">
    <property type="entry name" value="Hormone_recep"/>
    <property type="match status" value="1"/>
</dbReference>
<dbReference type="Pfam" id="PF00105">
    <property type="entry name" value="zf-C4"/>
    <property type="match status" value="1"/>
</dbReference>
<dbReference type="PIRSF" id="PIRSF002530">
    <property type="entry name" value="Nuc_orph_FTZ-F1"/>
    <property type="match status" value="1"/>
</dbReference>
<dbReference type="PRINTS" id="PR00398">
    <property type="entry name" value="STRDHORMONER"/>
</dbReference>
<dbReference type="PRINTS" id="PR00047">
    <property type="entry name" value="STROIDFINGER"/>
</dbReference>
<dbReference type="SMART" id="SM00430">
    <property type="entry name" value="HOLI"/>
    <property type="match status" value="1"/>
</dbReference>
<dbReference type="SMART" id="SM00399">
    <property type="entry name" value="ZnF_C4"/>
    <property type="match status" value="1"/>
</dbReference>
<dbReference type="SUPFAM" id="SSF57716">
    <property type="entry name" value="Glucocorticoid receptor-like (DNA-binding domain)"/>
    <property type="match status" value="1"/>
</dbReference>
<dbReference type="SUPFAM" id="SSF48508">
    <property type="entry name" value="Nuclear receptor ligand-binding domain"/>
    <property type="match status" value="1"/>
</dbReference>
<dbReference type="PROSITE" id="PS51843">
    <property type="entry name" value="NR_LBD"/>
    <property type="match status" value="1"/>
</dbReference>
<dbReference type="PROSITE" id="PS00031">
    <property type="entry name" value="NUCLEAR_REC_DBD_1"/>
    <property type="match status" value="1"/>
</dbReference>
<dbReference type="PROSITE" id="PS51030">
    <property type="entry name" value="NUCLEAR_REC_DBD_2"/>
    <property type="match status" value="1"/>
</dbReference>
<organism>
    <name type="scientific">Sus scrofa</name>
    <name type="common">Pig</name>
    <dbReference type="NCBI Taxonomy" id="9823"/>
    <lineage>
        <taxon>Eukaryota</taxon>
        <taxon>Metazoa</taxon>
        <taxon>Chordata</taxon>
        <taxon>Craniata</taxon>
        <taxon>Vertebrata</taxon>
        <taxon>Euteleostomi</taxon>
        <taxon>Mammalia</taxon>
        <taxon>Eutheria</taxon>
        <taxon>Laurasiatheria</taxon>
        <taxon>Artiodactyla</taxon>
        <taxon>Suina</taxon>
        <taxon>Suidae</taxon>
        <taxon>Sus</taxon>
    </lineage>
</organism>
<gene>
    <name type="primary">NR5A1</name>
    <name type="synonym">FTZF1</name>
</gene>
<name>STF1_PIG</name>
<feature type="chain" id="PRO_0000053733" description="Steroidogenic factor 1">
    <location>
        <begin position="1"/>
        <end position="461"/>
    </location>
</feature>
<feature type="domain" description="NR LBD" evidence="5">
    <location>
        <begin position="222"/>
        <end position="459"/>
    </location>
</feature>
<feature type="DNA-binding region" description="Nuclear receptor" evidence="4">
    <location>
        <begin position="10"/>
        <end position="85"/>
    </location>
</feature>
<feature type="zinc finger region" description="NR C4-type" evidence="4">
    <location>
        <begin position="13"/>
        <end position="33"/>
    </location>
</feature>
<feature type="zinc finger region" description="NR C4-type" evidence="4">
    <location>
        <begin position="49"/>
        <end position="73"/>
    </location>
</feature>
<feature type="region of interest" description="Disordered" evidence="6">
    <location>
        <begin position="119"/>
        <end position="150"/>
    </location>
</feature>
<feature type="region of interest" description="Important for dimerization">
    <location>
        <begin position="230"/>
        <end position="461"/>
    </location>
</feature>
<feature type="compositionally biased region" description="Pro residues" evidence="6">
    <location>
        <begin position="127"/>
        <end position="139"/>
    </location>
</feature>
<feature type="binding site" evidence="2">
    <location>
        <position position="341"/>
    </location>
    <ligand>
        <name>a 1,2-diacyl-sn-glycero-3-phosphocholine</name>
        <dbReference type="ChEBI" id="CHEBI:57643"/>
    </ligand>
</feature>
<feature type="binding site" evidence="2">
    <location>
        <position position="436"/>
    </location>
    <ligand>
        <name>a 1,2-diacyl-sn-glycero-3-phosphocholine</name>
        <dbReference type="ChEBI" id="CHEBI:57643"/>
    </ligand>
</feature>
<feature type="binding site" evidence="2">
    <location>
        <position position="440"/>
    </location>
    <ligand>
        <name>a 1,2-diacyl-sn-glycero-3-phosphocholine</name>
        <dbReference type="ChEBI" id="CHEBI:57643"/>
    </ligand>
</feature>
<feature type="modified residue" description="N6-acetyllysine" evidence="3">
    <location>
        <position position="34"/>
    </location>
</feature>
<feature type="modified residue" description="N6-acetyllysine" evidence="3">
    <location>
        <position position="38"/>
    </location>
</feature>
<feature type="modified residue" description="N6-acetyllysine" evidence="3">
    <location>
        <position position="72"/>
    </location>
</feature>
<feature type="modified residue" description="Phosphoserine; by CDK7" evidence="3">
    <location>
        <position position="203"/>
    </location>
</feature>
<feature type="cross-link" description="Glycyl lysine isopeptide (Lys-Gly) (interchain with G-Cter in SUMO)" evidence="1">
    <location>
        <position position="119"/>
    </location>
</feature>
<feature type="cross-link" description="Glycyl lysine isopeptide (Lys-Gly) (interchain with G-Cter in SUMO)" evidence="1">
    <location>
        <position position="194"/>
    </location>
</feature>
<feature type="sequence conflict" description="In Ref. 1; AAC64209." evidence="7" ref="1">
    <original>S</original>
    <variation>W</variation>
    <location>
        <position position="4"/>
    </location>
</feature>
<feature type="sequence conflict" description="In Ref. 1; AAC64209." evidence="7" ref="1">
    <original>S</original>
    <variation>T</variation>
    <location>
        <position position="32"/>
    </location>
</feature>
<feature type="sequence conflict" description="In Ref. 1; AAC64209." evidence="7" ref="1">
    <original>R</original>
    <variation>G</variation>
    <location>
        <position position="87"/>
    </location>
</feature>
<feature type="sequence conflict" description="In Ref. 1; AAC64209." evidence="7" ref="1">
    <original>L</original>
    <variation>H</variation>
    <location>
        <position position="306"/>
    </location>
</feature>
<accession>P79387</accession>
<accession>A2BD07</accession>
<proteinExistence type="evidence at transcript level"/>
<keyword id="KW-0007">Acetylation</keyword>
<keyword id="KW-0010">Activator</keyword>
<keyword id="KW-0238">DNA-binding</keyword>
<keyword id="KW-1017">Isopeptide bond</keyword>
<keyword id="KW-0446">Lipid-binding</keyword>
<keyword id="KW-0479">Metal-binding</keyword>
<keyword id="KW-0539">Nucleus</keyword>
<keyword id="KW-0597">Phosphoprotein</keyword>
<keyword id="KW-0675">Receptor</keyword>
<keyword id="KW-1185">Reference proteome</keyword>
<keyword id="KW-0804">Transcription</keyword>
<keyword id="KW-0805">Transcription regulation</keyword>
<keyword id="KW-0832">Ubl conjugation</keyword>
<keyword id="KW-0862">Zinc</keyword>
<keyword id="KW-0863">Zinc-finger</keyword>
<comment type="function">
    <text evidence="1">Transcriptional activator. Seems to be essential for sexual differentiation and formation of the primary steroidogenic tissues. Binds to the Ad4 site found in the promoter region of steroidogenic P450 genes such as CYP11A, CYP11B and CYP21B. Also regulates the AMH/Muellerian inhibiting substance gene as well as the AHCH and STAR genes. 5'-YCAAGGYC-3' and 5'-RRAGGTCA-3' are the consensus sequences for the recognition by NR5A1. The SFPQ-NONO-NR5A1 complex binds to the CYP17 promoter and regulates basal and cAMP-dependent transcriptional activity. Binds phosphatidylcholine and phospholipids with a phosphatidylinositol (PI) headgroup, in particular PI(3,4)P2 and PI(3,4,5)P3. Activated by the phosphorylation of NR5A1 by HIPK3 leading to increased steroidogenic gene expression upon cAMP signaling pathway stimulation (By similarity).</text>
</comment>
<comment type="subunit">
    <text evidence="1">Binds DNA as a monomer (By similarity). Part of a complex consisting of SFPQ, NONO and NR5A1. Interacts with NR0B2, NCOA2 and PPARGC1A. Interacts with DGKQ and CDK7. Binds to and activated by HIPK3 (By similarity).</text>
</comment>
<comment type="subcellular location">
    <subcellularLocation>
        <location evidence="4">Nucleus</location>
    </subcellularLocation>
</comment>
<comment type="PTM">
    <text evidence="1">Acetylation stimulates the transcriptional activity.</text>
</comment>
<comment type="PTM">
    <text evidence="1">Sumoylation reduces CDK7-mediated phosphorylation on Ser-203.</text>
</comment>
<comment type="PTM">
    <text evidence="1">Phosphorylated on Ser-203 by CDK7. This phosphorylation promotes transcriptional activity (By similarity).</text>
</comment>
<comment type="similarity">
    <text evidence="7">Belongs to the nuclear hormone receptor family. NR5 subfamily.</text>
</comment>
<sequence>MDYSYDEDLDELCPVCGDKVSGYHYGLLTCESCKGFFKRTVQNNKHYTCTESQSCKIDKTQRKRCPFCRFQKCLTVGMRLEAVRADRMRGGRNKFGPMYKRDRALKQQKKAQIRANGFKLETGPPMGVAPPPPPPPDYMLPPGLHAPEPKGLAAGPPTGPLGDFGAPTLPMAVPSAHGPLAGYLYPAFPGRAIKSEYPEPYASPPQPGPPYGYPEPFSGGPGVPELIVQLLQLEPDEDQVRARIVGCLQEPAKGRPDQPAPFSLLCRMADQTFISIVDWARRCMVFKELEVADQMTLLQNCWSELLVFDHIYRQIQHGKEGSILLVTGQEVELTTVAAQAGSLLHGLVLRAQELVLQLHALQLDRQEFVCLKFLILFSLDVKFLNNHSLVKDAQEKANAALLDYTLCHYPHCGDKFQQLLLCLVEVRALSMQAKEYLYHKHLGNEMPRNNLLIEMLQAKQT</sequence>
<reference key="1">
    <citation type="journal article" date="1998" name="Endocrinology">
        <title>Porcine steroidogenic factor-1 gene (pSF-1) expression and analysis of embryonic pig gonads during sexual differentiation.</title>
        <authorList>
            <person name="Pilon N."/>
            <person name="Behdjani R."/>
            <person name="Daneau I."/>
            <person name="Lussier J.G."/>
            <person name="Silversides D.W."/>
        </authorList>
    </citation>
    <scope>NUCLEOTIDE SEQUENCE [MRNA]</scope>
</reference>
<reference key="2">
    <citation type="journal article" date="2007" name="Genome Res.">
        <title>Fine mapping of a swine quantitative trait locus for number of vertebrae and analysis of an orphan nuclear receptor, germ cell nuclear factor (NR6A1).</title>
        <authorList>
            <person name="Mikawa S."/>
            <person name="Morozumi T."/>
            <person name="Shimanuki S."/>
            <person name="Hayashi T."/>
            <person name="Uenishi H."/>
            <person name="Domukai M."/>
            <person name="Okumura N."/>
            <person name="Awata T."/>
        </authorList>
    </citation>
    <scope>NUCLEOTIDE SEQUENCE [GENOMIC DNA]</scope>
    <source>
        <strain>Large white X Landrace X Duroc</strain>
    </source>
</reference>
<evidence type="ECO:0000250" key="1"/>
<evidence type="ECO:0000250" key="2">
    <source>
        <dbReference type="UniProtKB" id="P33242"/>
    </source>
</evidence>
<evidence type="ECO:0000250" key="3">
    <source>
        <dbReference type="UniProtKB" id="Q13285"/>
    </source>
</evidence>
<evidence type="ECO:0000255" key="4">
    <source>
        <dbReference type="PROSITE-ProRule" id="PRU00407"/>
    </source>
</evidence>
<evidence type="ECO:0000255" key="5">
    <source>
        <dbReference type="PROSITE-ProRule" id="PRU01189"/>
    </source>
</evidence>
<evidence type="ECO:0000256" key="6">
    <source>
        <dbReference type="SAM" id="MobiDB-lite"/>
    </source>
</evidence>
<evidence type="ECO:0000305" key="7"/>